<accession>Q914H0</accession>
<proteinExistence type="predicted"/>
<sequence length="64" mass="7599">MISYKYGEKDKTLHVKIYVLIEHVPQKPSEEELRKVLPKILKDFANMVEQGKIKILDSDEWGIW</sequence>
<organism>
    <name type="scientific">Sulfolobus islandicus filamentous virus (isolate Iceland/Hveragerdi)</name>
    <name type="common">SIFV</name>
    <dbReference type="NCBI Taxonomy" id="654908"/>
    <lineage>
        <taxon>Viruses</taxon>
        <taxon>Adnaviria</taxon>
        <taxon>Zilligvirae</taxon>
        <taxon>Taleaviricota</taxon>
        <taxon>Tokiviricetes</taxon>
        <taxon>Ligamenvirales</taxon>
        <taxon>Lipothrixviridae</taxon>
        <taxon>Betalipothrixvirus</taxon>
        <taxon>Sulfolobus islandicus filamentous virus</taxon>
    </lineage>
</organism>
<feature type="chain" id="PRO_0000385416" description="Uncharacterized protein 62">
    <location>
        <begin position="1"/>
        <end position="64"/>
    </location>
</feature>
<keyword id="KW-1185">Reference proteome</keyword>
<gene>
    <name type="primary">SIFV0062</name>
</gene>
<reference key="1">
    <citation type="journal article" date="2000" name="Virology">
        <title>A novel lipothrixvirus, SIFV, of the extremely thermophilic crenarchaeon Sulfolobus.</title>
        <authorList>
            <person name="Arnold H.P."/>
            <person name="Zillig W."/>
            <person name="Ziese U."/>
            <person name="Holz I."/>
            <person name="Crosby M."/>
            <person name="Utterback T."/>
            <person name="Weidmann J.F."/>
            <person name="Umayam L.A."/>
            <person name="Teffera K."/>
            <person name="Kristjanson J.K."/>
            <person name="Klenk H.P."/>
            <person name="Nelson K.E."/>
            <person name="Fraser C.M."/>
        </authorList>
    </citation>
    <scope>NUCLEOTIDE SEQUENCE [GENOMIC DNA]</scope>
</reference>
<protein>
    <recommendedName>
        <fullName>Uncharacterized protein 62</fullName>
    </recommendedName>
</protein>
<organismHost>
    <name type="scientific">Saccharolobus islandicus</name>
    <name type="common">Sulfolobus islandicus</name>
    <dbReference type="NCBI Taxonomy" id="43080"/>
</organismHost>
<dbReference type="EMBL" id="AF440571">
    <property type="protein sequence ID" value="AAL27771.1"/>
    <property type="molecule type" value="Genomic_DNA"/>
</dbReference>
<dbReference type="RefSeq" id="NP_445725.1">
    <property type="nucleotide sequence ID" value="NC_003214.2"/>
</dbReference>
<dbReference type="SMR" id="Q914H0"/>
<dbReference type="GeneID" id="922319"/>
<dbReference type="KEGG" id="vg:922319"/>
<dbReference type="Proteomes" id="UP000007017">
    <property type="component" value="Segment"/>
</dbReference>
<name>Y062_SIFVH</name>